<comment type="function">
    <text evidence="1">Catalyzes the attachment of serine to tRNA(Ser). Is also able to aminoacylate tRNA(Sec) with serine, to form the misacylated tRNA L-seryl-tRNA(Sec), which will be further converted into selenocysteinyl-tRNA(Sec).</text>
</comment>
<comment type="catalytic activity">
    <reaction evidence="1">
        <text>tRNA(Ser) + L-serine + ATP = L-seryl-tRNA(Ser) + AMP + diphosphate + H(+)</text>
        <dbReference type="Rhea" id="RHEA:12292"/>
        <dbReference type="Rhea" id="RHEA-COMP:9669"/>
        <dbReference type="Rhea" id="RHEA-COMP:9703"/>
        <dbReference type="ChEBI" id="CHEBI:15378"/>
        <dbReference type="ChEBI" id="CHEBI:30616"/>
        <dbReference type="ChEBI" id="CHEBI:33019"/>
        <dbReference type="ChEBI" id="CHEBI:33384"/>
        <dbReference type="ChEBI" id="CHEBI:78442"/>
        <dbReference type="ChEBI" id="CHEBI:78533"/>
        <dbReference type="ChEBI" id="CHEBI:456215"/>
        <dbReference type="EC" id="6.1.1.11"/>
    </reaction>
</comment>
<comment type="catalytic activity">
    <reaction evidence="1">
        <text>tRNA(Sec) + L-serine + ATP = L-seryl-tRNA(Sec) + AMP + diphosphate + H(+)</text>
        <dbReference type="Rhea" id="RHEA:42580"/>
        <dbReference type="Rhea" id="RHEA-COMP:9742"/>
        <dbReference type="Rhea" id="RHEA-COMP:10128"/>
        <dbReference type="ChEBI" id="CHEBI:15378"/>
        <dbReference type="ChEBI" id="CHEBI:30616"/>
        <dbReference type="ChEBI" id="CHEBI:33019"/>
        <dbReference type="ChEBI" id="CHEBI:33384"/>
        <dbReference type="ChEBI" id="CHEBI:78442"/>
        <dbReference type="ChEBI" id="CHEBI:78533"/>
        <dbReference type="ChEBI" id="CHEBI:456215"/>
        <dbReference type="EC" id="6.1.1.11"/>
    </reaction>
</comment>
<comment type="pathway">
    <text evidence="1">Aminoacyl-tRNA biosynthesis; selenocysteinyl-tRNA(Sec) biosynthesis; L-seryl-tRNA(Sec) from L-serine and tRNA(Sec): step 1/1.</text>
</comment>
<comment type="subunit">
    <text evidence="1">Homodimer. The tRNA molecule binds across the dimer.</text>
</comment>
<comment type="subcellular location">
    <subcellularLocation>
        <location evidence="1">Cytoplasm</location>
    </subcellularLocation>
</comment>
<comment type="domain">
    <text evidence="1">Consists of two distinct domains, a catalytic core and a N-terminal extension that is involved in tRNA binding.</text>
</comment>
<comment type="similarity">
    <text evidence="1">Belongs to the class-II aminoacyl-tRNA synthetase family. Type-1 seryl-tRNA synthetase subfamily.</text>
</comment>
<accession>Q1GV79</accession>
<name>SYS_SPHAL</name>
<evidence type="ECO:0000255" key="1">
    <source>
        <dbReference type="HAMAP-Rule" id="MF_00176"/>
    </source>
</evidence>
<keyword id="KW-0030">Aminoacyl-tRNA synthetase</keyword>
<keyword id="KW-0067">ATP-binding</keyword>
<keyword id="KW-0963">Cytoplasm</keyword>
<keyword id="KW-0436">Ligase</keyword>
<keyword id="KW-0547">Nucleotide-binding</keyword>
<keyword id="KW-0648">Protein biosynthesis</keyword>
<keyword id="KW-1185">Reference proteome</keyword>
<feature type="chain" id="PRO_1000019827" description="Serine--tRNA ligase">
    <location>
        <begin position="1"/>
        <end position="426"/>
    </location>
</feature>
<feature type="binding site" evidence="1">
    <location>
        <begin position="230"/>
        <end position="232"/>
    </location>
    <ligand>
        <name>L-serine</name>
        <dbReference type="ChEBI" id="CHEBI:33384"/>
    </ligand>
</feature>
<feature type="binding site" evidence="1">
    <location>
        <begin position="261"/>
        <end position="263"/>
    </location>
    <ligand>
        <name>ATP</name>
        <dbReference type="ChEBI" id="CHEBI:30616"/>
    </ligand>
</feature>
<feature type="binding site" evidence="1">
    <location>
        <position position="284"/>
    </location>
    <ligand>
        <name>L-serine</name>
        <dbReference type="ChEBI" id="CHEBI:33384"/>
    </ligand>
</feature>
<feature type="binding site" evidence="1">
    <location>
        <begin position="348"/>
        <end position="351"/>
    </location>
    <ligand>
        <name>ATP</name>
        <dbReference type="ChEBI" id="CHEBI:30616"/>
    </ligand>
</feature>
<feature type="binding site" evidence="1">
    <location>
        <position position="384"/>
    </location>
    <ligand>
        <name>L-serine</name>
        <dbReference type="ChEBI" id="CHEBI:33384"/>
    </ligand>
</feature>
<proteinExistence type="inferred from homology"/>
<gene>
    <name evidence="1" type="primary">serS</name>
    <name type="ordered locus">Sala_0722</name>
</gene>
<protein>
    <recommendedName>
        <fullName evidence="1">Serine--tRNA ligase</fullName>
        <ecNumber evidence="1">6.1.1.11</ecNumber>
    </recommendedName>
    <alternativeName>
        <fullName evidence="1">Seryl-tRNA synthetase</fullName>
        <shortName evidence="1">SerRS</shortName>
    </alternativeName>
    <alternativeName>
        <fullName evidence="1">Seryl-tRNA(Ser/Sec) synthetase</fullName>
    </alternativeName>
</protein>
<sequence length="426" mass="46589">MHDIRLIRDNPHAFDAGLARRGLAPLSAEILAADAELRALQTDIQAALARRNEASKLIGQAMAAGDKDKAEALKAEVAALKAALPAREEAERAQLAALHDRLAALPNLPADDVPDGEDEAGNVELSRWGTPRSFDFTPLEHADFAPALGLDFETAAKMSGARFAFLKGPMARLERALGQFMLDRQTIEAGYTECATPLLVRDDAAFGTTQLPKFREDLFQTTDGLWLISTSEMSLTNAVREQILAEADLPIRMTALTPCFRSEAGSAGRDTRGYIRQHQFWKVELVSITRPEDSDAELERKTRAAESILEALELPYRKMLLCAGDMGFAARKTYDLEVWLPGQNAYREISSCSNCGDFQARRMNARFRREGGKGNEFVHTLNGSGLAVGRTLVAILENYQQADGSVDIPAALLPYMGGITRLTPLG</sequence>
<organism>
    <name type="scientific">Sphingopyxis alaskensis (strain DSM 13593 / LMG 18877 / RB2256)</name>
    <name type="common">Sphingomonas alaskensis</name>
    <dbReference type="NCBI Taxonomy" id="317655"/>
    <lineage>
        <taxon>Bacteria</taxon>
        <taxon>Pseudomonadati</taxon>
        <taxon>Pseudomonadota</taxon>
        <taxon>Alphaproteobacteria</taxon>
        <taxon>Sphingomonadales</taxon>
        <taxon>Sphingomonadaceae</taxon>
        <taxon>Sphingopyxis</taxon>
    </lineage>
</organism>
<dbReference type="EC" id="6.1.1.11" evidence="1"/>
<dbReference type="EMBL" id="CP000356">
    <property type="protein sequence ID" value="ABF52443.1"/>
    <property type="molecule type" value="Genomic_DNA"/>
</dbReference>
<dbReference type="RefSeq" id="WP_011541033.1">
    <property type="nucleotide sequence ID" value="NC_008048.1"/>
</dbReference>
<dbReference type="SMR" id="Q1GV79"/>
<dbReference type="STRING" id="317655.Sala_0722"/>
<dbReference type="KEGG" id="sal:Sala_0722"/>
<dbReference type="eggNOG" id="COG0172">
    <property type="taxonomic scope" value="Bacteria"/>
</dbReference>
<dbReference type="HOGENOM" id="CLU_023797_1_1_5"/>
<dbReference type="OrthoDB" id="9804647at2"/>
<dbReference type="UniPathway" id="UPA00906">
    <property type="reaction ID" value="UER00895"/>
</dbReference>
<dbReference type="Proteomes" id="UP000006578">
    <property type="component" value="Chromosome"/>
</dbReference>
<dbReference type="GO" id="GO:0005737">
    <property type="term" value="C:cytoplasm"/>
    <property type="evidence" value="ECO:0007669"/>
    <property type="project" value="UniProtKB-SubCell"/>
</dbReference>
<dbReference type="GO" id="GO:0005524">
    <property type="term" value="F:ATP binding"/>
    <property type="evidence" value="ECO:0007669"/>
    <property type="project" value="UniProtKB-UniRule"/>
</dbReference>
<dbReference type="GO" id="GO:0004828">
    <property type="term" value="F:serine-tRNA ligase activity"/>
    <property type="evidence" value="ECO:0007669"/>
    <property type="project" value="UniProtKB-UniRule"/>
</dbReference>
<dbReference type="GO" id="GO:0016260">
    <property type="term" value="P:selenocysteine biosynthetic process"/>
    <property type="evidence" value="ECO:0007669"/>
    <property type="project" value="UniProtKB-UniRule"/>
</dbReference>
<dbReference type="GO" id="GO:0006434">
    <property type="term" value="P:seryl-tRNA aminoacylation"/>
    <property type="evidence" value="ECO:0007669"/>
    <property type="project" value="UniProtKB-UniRule"/>
</dbReference>
<dbReference type="CDD" id="cd00770">
    <property type="entry name" value="SerRS_core"/>
    <property type="match status" value="1"/>
</dbReference>
<dbReference type="Gene3D" id="3.30.930.10">
    <property type="entry name" value="Bira Bifunctional Protein, Domain 2"/>
    <property type="match status" value="1"/>
</dbReference>
<dbReference type="Gene3D" id="1.10.287.40">
    <property type="entry name" value="Serine-tRNA synthetase, tRNA binding domain"/>
    <property type="match status" value="1"/>
</dbReference>
<dbReference type="HAMAP" id="MF_00176">
    <property type="entry name" value="Ser_tRNA_synth_type1"/>
    <property type="match status" value="1"/>
</dbReference>
<dbReference type="InterPro" id="IPR002314">
    <property type="entry name" value="aa-tRNA-synt_IIb"/>
</dbReference>
<dbReference type="InterPro" id="IPR006195">
    <property type="entry name" value="aa-tRNA-synth_II"/>
</dbReference>
<dbReference type="InterPro" id="IPR045864">
    <property type="entry name" value="aa-tRNA-synth_II/BPL/LPL"/>
</dbReference>
<dbReference type="InterPro" id="IPR002317">
    <property type="entry name" value="Ser-tRNA-ligase_type_1"/>
</dbReference>
<dbReference type="InterPro" id="IPR015866">
    <property type="entry name" value="Ser-tRNA-synth_1_N"/>
</dbReference>
<dbReference type="InterPro" id="IPR042103">
    <property type="entry name" value="SerRS_1_N_sf"/>
</dbReference>
<dbReference type="InterPro" id="IPR033729">
    <property type="entry name" value="SerRS_core"/>
</dbReference>
<dbReference type="InterPro" id="IPR010978">
    <property type="entry name" value="tRNA-bd_arm"/>
</dbReference>
<dbReference type="NCBIfam" id="TIGR00414">
    <property type="entry name" value="serS"/>
    <property type="match status" value="1"/>
</dbReference>
<dbReference type="PANTHER" id="PTHR43697:SF1">
    <property type="entry name" value="SERINE--TRNA LIGASE"/>
    <property type="match status" value="1"/>
</dbReference>
<dbReference type="PANTHER" id="PTHR43697">
    <property type="entry name" value="SERYL-TRNA SYNTHETASE"/>
    <property type="match status" value="1"/>
</dbReference>
<dbReference type="Pfam" id="PF02403">
    <property type="entry name" value="Seryl_tRNA_N"/>
    <property type="match status" value="1"/>
</dbReference>
<dbReference type="Pfam" id="PF00587">
    <property type="entry name" value="tRNA-synt_2b"/>
    <property type="match status" value="1"/>
</dbReference>
<dbReference type="PIRSF" id="PIRSF001529">
    <property type="entry name" value="Ser-tRNA-synth_IIa"/>
    <property type="match status" value="1"/>
</dbReference>
<dbReference type="PRINTS" id="PR00981">
    <property type="entry name" value="TRNASYNTHSER"/>
</dbReference>
<dbReference type="SUPFAM" id="SSF55681">
    <property type="entry name" value="Class II aaRS and biotin synthetases"/>
    <property type="match status" value="1"/>
</dbReference>
<dbReference type="SUPFAM" id="SSF46589">
    <property type="entry name" value="tRNA-binding arm"/>
    <property type="match status" value="1"/>
</dbReference>
<dbReference type="PROSITE" id="PS50862">
    <property type="entry name" value="AA_TRNA_LIGASE_II"/>
    <property type="match status" value="1"/>
</dbReference>
<reference key="1">
    <citation type="journal article" date="2009" name="Proc. Natl. Acad. Sci. U.S.A.">
        <title>The genomic basis of trophic strategy in marine bacteria.</title>
        <authorList>
            <person name="Lauro F.M."/>
            <person name="McDougald D."/>
            <person name="Thomas T."/>
            <person name="Williams T.J."/>
            <person name="Egan S."/>
            <person name="Rice S."/>
            <person name="DeMaere M.Z."/>
            <person name="Ting L."/>
            <person name="Ertan H."/>
            <person name="Johnson J."/>
            <person name="Ferriera S."/>
            <person name="Lapidus A."/>
            <person name="Anderson I."/>
            <person name="Kyrpides N."/>
            <person name="Munk A.C."/>
            <person name="Detter C."/>
            <person name="Han C.S."/>
            <person name="Brown M.V."/>
            <person name="Robb F.T."/>
            <person name="Kjelleberg S."/>
            <person name="Cavicchioli R."/>
        </authorList>
    </citation>
    <scope>NUCLEOTIDE SEQUENCE [LARGE SCALE GENOMIC DNA]</scope>
    <source>
        <strain>DSM 13593 / LMG 18877 / RB2256</strain>
    </source>
</reference>